<reference key="1">
    <citation type="journal article" date="1997" name="Nature">
        <title>The complete genome sequence of the gastric pathogen Helicobacter pylori.</title>
        <authorList>
            <person name="Tomb J.-F."/>
            <person name="White O."/>
            <person name="Kerlavage A.R."/>
            <person name="Clayton R.A."/>
            <person name="Sutton G.G."/>
            <person name="Fleischmann R.D."/>
            <person name="Ketchum K.A."/>
            <person name="Klenk H.-P."/>
            <person name="Gill S.R."/>
            <person name="Dougherty B.A."/>
            <person name="Nelson K.E."/>
            <person name="Quackenbush J."/>
            <person name="Zhou L."/>
            <person name="Kirkness E.F."/>
            <person name="Peterson S.N."/>
            <person name="Loftus B.J."/>
            <person name="Richardson D.L."/>
            <person name="Dodson R.J."/>
            <person name="Khalak H.G."/>
            <person name="Glodek A."/>
            <person name="McKenney K."/>
            <person name="FitzGerald L.M."/>
            <person name="Lee N."/>
            <person name="Adams M.D."/>
            <person name="Hickey E.K."/>
            <person name="Berg D.E."/>
            <person name="Gocayne J.D."/>
            <person name="Utterback T.R."/>
            <person name="Peterson J.D."/>
            <person name="Kelley J.M."/>
            <person name="Cotton M.D."/>
            <person name="Weidman J.F."/>
            <person name="Fujii C."/>
            <person name="Bowman C."/>
            <person name="Watthey L."/>
            <person name="Wallin E."/>
            <person name="Hayes W.S."/>
            <person name="Borodovsky M."/>
            <person name="Karp P.D."/>
            <person name="Smith H.O."/>
            <person name="Fraser C.M."/>
            <person name="Venter J.C."/>
        </authorList>
    </citation>
    <scope>NUCLEOTIDE SEQUENCE [LARGE SCALE GENOMIC DNA]</scope>
    <source>
        <strain>ATCC 700392 / 26695</strain>
    </source>
</reference>
<gene>
    <name type="ordered locus">HP_1484</name>
</gene>
<feature type="chain" id="PRO_0000217658" description="Protoporphyrinogen IX oxidase">
    <location>
        <begin position="1"/>
        <end position="148"/>
    </location>
</feature>
<feature type="transmembrane region" description="Helical" evidence="2">
    <location>
        <begin position="7"/>
        <end position="27"/>
    </location>
</feature>
<feature type="transmembrane region" description="Helical" evidence="2">
    <location>
        <begin position="58"/>
        <end position="78"/>
    </location>
</feature>
<feature type="transmembrane region" description="Helical" evidence="2">
    <location>
        <begin position="86"/>
        <end position="106"/>
    </location>
</feature>
<feature type="transmembrane region" description="Helical" evidence="2">
    <location>
        <begin position="128"/>
        <end position="148"/>
    </location>
</feature>
<feature type="binding site" description="axial binding residue" evidence="1">
    <location>
        <position position="15"/>
    </location>
    <ligand>
        <name>heme</name>
        <dbReference type="ChEBI" id="CHEBI:30413"/>
    </ligand>
    <ligandPart>
        <name>Fe</name>
        <dbReference type="ChEBI" id="CHEBI:18248"/>
    </ligandPart>
</feature>
<feature type="binding site" description="axial binding residue" evidence="1">
    <location>
        <position position="92"/>
    </location>
    <ligand>
        <name>heme</name>
        <dbReference type="ChEBI" id="CHEBI:30413"/>
    </ligand>
    <ligandPart>
        <name>Fe</name>
        <dbReference type="ChEBI" id="CHEBI:18248"/>
    </ligandPart>
</feature>
<sequence>MGFLNGYFLWVKAFHVIAVISWMAALFYLPRLFVYHAENAHKKEFVGVVQIQEKKLYSFIASPAMGFTLITGILMLLIEPTLFKSGGWLHAKLALVVLLLAYHFYCKKCMRELEKDPTRRNARFYRVFNEAPTILMILIVILVVVKPF</sequence>
<organism>
    <name type="scientific">Helicobacter pylori (strain ATCC 700392 / 26695)</name>
    <name type="common">Campylobacter pylori</name>
    <dbReference type="NCBI Taxonomy" id="85962"/>
    <lineage>
        <taxon>Bacteria</taxon>
        <taxon>Pseudomonadati</taxon>
        <taxon>Campylobacterota</taxon>
        <taxon>Epsilonproteobacteria</taxon>
        <taxon>Campylobacterales</taxon>
        <taxon>Helicobacteraceae</taxon>
        <taxon>Helicobacter</taxon>
    </lineage>
</organism>
<accession>O26018</accession>
<protein>
    <recommendedName>
        <fullName evidence="1">Protoporphyrinogen IX oxidase</fullName>
        <shortName evidence="1">PPO</shortName>
        <ecNumber evidence="1">1.3.99.-</ecNumber>
    </recommendedName>
</protein>
<evidence type="ECO:0000250" key="1">
    <source>
        <dbReference type="UniProtKB" id="P72793"/>
    </source>
</evidence>
<evidence type="ECO:0000255" key="2"/>
<evidence type="ECO:0000255" key="3">
    <source>
        <dbReference type="HAMAP-Rule" id="MF_02239"/>
    </source>
</evidence>
<evidence type="ECO:0000305" key="4"/>
<comment type="function">
    <text evidence="1">Catalyzes the oxidation of protoporphyrinogen IX to protoporphyrin IX. Is involved in the biosynthesis of tetrapyrrole molecules like heme. Does not use oxygen or artificial electron acceptors such as menadione or benzoquinone.</text>
</comment>
<comment type="catalytic activity">
    <reaction evidence="1">
        <text>protoporphyrinogen IX + 3 A = protoporphyrin IX + 3 AH2</text>
        <dbReference type="Rhea" id="RHEA:62000"/>
        <dbReference type="ChEBI" id="CHEBI:13193"/>
        <dbReference type="ChEBI" id="CHEBI:17499"/>
        <dbReference type="ChEBI" id="CHEBI:57306"/>
        <dbReference type="ChEBI" id="CHEBI:57307"/>
    </reaction>
</comment>
<comment type="cofactor">
    <cofactor evidence="1">
        <name>heme b</name>
        <dbReference type="ChEBI" id="CHEBI:60344"/>
    </cofactor>
    <text evidence="1">Binds 1 heme b (iron(II)-protoporphyrin IX) group per subunit.</text>
</comment>
<comment type="pathway">
    <text evidence="1">Porphyrin-containing compound metabolism; protoporphyrin-IX biosynthesis; protoporphyrin-IX from protoporphyrinogen-IX: step 1/1.</text>
</comment>
<comment type="subunit">
    <text evidence="1">Homodimer.</text>
</comment>
<comment type="subcellular location">
    <subcellularLocation>
        <location evidence="1">Cell membrane</location>
        <topology evidence="2">Multi-pass membrane protein</topology>
    </subcellularLocation>
</comment>
<comment type="similarity">
    <text evidence="3 4">Belongs to the HemJ family.</text>
</comment>
<proteinExistence type="inferred from homology"/>
<keyword id="KW-1003">Cell membrane</keyword>
<keyword id="KW-0349">Heme</keyword>
<keyword id="KW-0408">Iron</keyword>
<keyword id="KW-0472">Membrane</keyword>
<keyword id="KW-0479">Metal-binding</keyword>
<keyword id="KW-0560">Oxidoreductase</keyword>
<keyword id="KW-1185">Reference proteome</keyword>
<keyword id="KW-0812">Transmembrane</keyword>
<keyword id="KW-1133">Transmembrane helix</keyword>
<dbReference type="EC" id="1.3.99.-" evidence="1"/>
<dbReference type="EMBL" id="AE000511">
    <property type="protein sequence ID" value="AAD08519.1"/>
    <property type="molecule type" value="Genomic_DNA"/>
</dbReference>
<dbReference type="PIR" id="D64705">
    <property type="entry name" value="D64705"/>
</dbReference>
<dbReference type="RefSeq" id="NP_208275.1">
    <property type="nucleotide sequence ID" value="NC_000915.1"/>
</dbReference>
<dbReference type="IntAct" id="O26018">
    <property type="interactions" value="1"/>
</dbReference>
<dbReference type="STRING" id="85962.HP_1484"/>
<dbReference type="PaxDb" id="85962-C694_07685"/>
<dbReference type="EnsemblBacteria" id="AAD08519">
    <property type="protein sequence ID" value="AAD08519"/>
    <property type="gene ID" value="HP_1484"/>
</dbReference>
<dbReference type="KEGG" id="heo:C694_07685"/>
<dbReference type="KEGG" id="hpy:HP_1484"/>
<dbReference type="PATRIC" id="fig|85962.47.peg.1595"/>
<dbReference type="eggNOG" id="COG1981">
    <property type="taxonomic scope" value="Bacteria"/>
</dbReference>
<dbReference type="InParanoid" id="O26018"/>
<dbReference type="OrthoDB" id="9800824at2"/>
<dbReference type="PhylomeDB" id="O26018"/>
<dbReference type="UniPathway" id="UPA00251">
    <property type="reaction ID" value="UER00324"/>
</dbReference>
<dbReference type="Proteomes" id="UP000000429">
    <property type="component" value="Chromosome"/>
</dbReference>
<dbReference type="GO" id="GO:0005886">
    <property type="term" value="C:plasma membrane"/>
    <property type="evidence" value="ECO:0007669"/>
    <property type="project" value="UniProtKB-SubCell"/>
</dbReference>
<dbReference type="GO" id="GO:0046872">
    <property type="term" value="F:metal ion binding"/>
    <property type="evidence" value="ECO:0007669"/>
    <property type="project" value="UniProtKB-KW"/>
</dbReference>
<dbReference type="GO" id="GO:0070818">
    <property type="term" value="F:protoporphyrinogen oxidase activity"/>
    <property type="evidence" value="ECO:0007669"/>
    <property type="project" value="UniProtKB-UniRule"/>
</dbReference>
<dbReference type="GO" id="GO:0006782">
    <property type="term" value="P:protoporphyrinogen IX biosynthetic process"/>
    <property type="evidence" value="ECO:0007669"/>
    <property type="project" value="UniProtKB-UniRule"/>
</dbReference>
<dbReference type="HAMAP" id="MF_02239">
    <property type="entry name" value="HemJ"/>
    <property type="match status" value="1"/>
</dbReference>
<dbReference type="InterPro" id="IPR005265">
    <property type="entry name" value="HemJ-like"/>
</dbReference>
<dbReference type="NCBIfam" id="TIGR00701">
    <property type="entry name" value="protoporphyrinogen oxidase HemJ"/>
    <property type="match status" value="1"/>
</dbReference>
<dbReference type="PANTHER" id="PTHR40255:SF1">
    <property type="entry name" value="PROTOPORPHYRINOGEN IX OXIDASE"/>
    <property type="match status" value="1"/>
</dbReference>
<dbReference type="PANTHER" id="PTHR40255">
    <property type="entry name" value="UPF0093 MEMBRANE PROTEIN SLR1790"/>
    <property type="match status" value="1"/>
</dbReference>
<dbReference type="Pfam" id="PF03653">
    <property type="entry name" value="UPF0093"/>
    <property type="match status" value="1"/>
</dbReference>
<dbReference type="PIRSF" id="PIRSF004638">
    <property type="entry name" value="UCP004638"/>
    <property type="match status" value="1"/>
</dbReference>
<name>HEMJ_HELPY</name>